<evidence type="ECO:0000255" key="1">
    <source>
        <dbReference type="HAMAP-Rule" id="MF_01215"/>
    </source>
</evidence>
<sequence>MTTKELFDRICRKRSFLCVGLDTDVKKIPPHLLNEDDPILAFNKAIIDATAEYCVAFKPNMAFYESMGSFGAHSFEKTIEYIRERYPDQFIIADAKRGDIGNTSDMYARSFFEHLKVDALTVSPYMGEDSISPFLSYAGKFTVLLALTSNKGSQDFQMMRDADGEYLFERVIRISQTWDNAGQLMYVVGATQASMLKDIREIVPDAFLLVPGVGAQGGSLEDVAEYGMNAHCGLLVNASRSIIYADNTEGFAAKAAGEAAAMQRQMEIALRAKGLI</sequence>
<reference key="1">
    <citation type="journal article" date="2008" name="DNA Res.">
        <title>Determination of the genome sequence of Porphyromonas gingivalis strain ATCC 33277 and genomic comparison with strain W83 revealed extensive genome rearrangements in P. gingivalis.</title>
        <authorList>
            <person name="Naito M."/>
            <person name="Hirakawa H."/>
            <person name="Yamashita A."/>
            <person name="Ohara N."/>
            <person name="Shoji M."/>
            <person name="Yukitake H."/>
            <person name="Nakayama K."/>
            <person name="Toh H."/>
            <person name="Yoshimura F."/>
            <person name="Kuhara S."/>
            <person name="Hattori M."/>
            <person name="Hayashi T."/>
            <person name="Nakayama K."/>
        </authorList>
    </citation>
    <scope>NUCLEOTIDE SEQUENCE [LARGE SCALE GENOMIC DNA]</scope>
    <source>
        <strain>ATCC 33277 / DSM 20709 / CIP 103683 / JCM 12257 / NCTC 11834 / 2561</strain>
    </source>
</reference>
<dbReference type="EC" id="4.1.1.23" evidence="1"/>
<dbReference type="EMBL" id="AP009380">
    <property type="protein sequence ID" value="BAG34539.1"/>
    <property type="molecule type" value="Genomic_DNA"/>
</dbReference>
<dbReference type="RefSeq" id="WP_012458691.1">
    <property type="nucleotide sequence ID" value="NC_010729.1"/>
</dbReference>
<dbReference type="SMR" id="B2RME4"/>
<dbReference type="GeneID" id="29257157"/>
<dbReference type="KEGG" id="pgn:PGN_2021"/>
<dbReference type="eggNOG" id="COG0284">
    <property type="taxonomic scope" value="Bacteria"/>
</dbReference>
<dbReference type="HOGENOM" id="CLU_060704_1_0_10"/>
<dbReference type="OrthoDB" id="9808470at2"/>
<dbReference type="BioCyc" id="PGIN431947:G1G2V-2254-MONOMER"/>
<dbReference type="UniPathway" id="UPA00070">
    <property type="reaction ID" value="UER00120"/>
</dbReference>
<dbReference type="Proteomes" id="UP000008842">
    <property type="component" value="Chromosome"/>
</dbReference>
<dbReference type="GO" id="GO:0004590">
    <property type="term" value="F:orotidine-5'-phosphate decarboxylase activity"/>
    <property type="evidence" value="ECO:0007669"/>
    <property type="project" value="UniProtKB-UniRule"/>
</dbReference>
<dbReference type="GO" id="GO:0006207">
    <property type="term" value="P:'de novo' pyrimidine nucleobase biosynthetic process"/>
    <property type="evidence" value="ECO:0007669"/>
    <property type="project" value="InterPro"/>
</dbReference>
<dbReference type="GO" id="GO:0044205">
    <property type="term" value="P:'de novo' UMP biosynthetic process"/>
    <property type="evidence" value="ECO:0007669"/>
    <property type="project" value="UniProtKB-UniRule"/>
</dbReference>
<dbReference type="CDD" id="cd04725">
    <property type="entry name" value="OMP_decarboxylase_like"/>
    <property type="match status" value="1"/>
</dbReference>
<dbReference type="FunFam" id="3.20.20.70:FF:000157">
    <property type="entry name" value="Orotidine 5'-phosphate decarboxylase"/>
    <property type="match status" value="1"/>
</dbReference>
<dbReference type="Gene3D" id="3.20.20.70">
    <property type="entry name" value="Aldolase class I"/>
    <property type="match status" value="1"/>
</dbReference>
<dbReference type="HAMAP" id="MF_01215">
    <property type="entry name" value="OMPdecase_type2"/>
    <property type="match status" value="1"/>
</dbReference>
<dbReference type="InterPro" id="IPR013785">
    <property type="entry name" value="Aldolase_TIM"/>
</dbReference>
<dbReference type="InterPro" id="IPR011995">
    <property type="entry name" value="OMPdecase_type-2"/>
</dbReference>
<dbReference type="InterPro" id="IPR001754">
    <property type="entry name" value="OMPdeCOase_dom"/>
</dbReference>
<dbReference type="InterPro" id="IPR011060">
    <property type="entry name" value="RibuloseP-bd_barrel"/>
</dbReference>
<dbReference type="NCBIfam" id="TIGR02127">
    <property type="entry name" value="pyrF_sub2"/>
    <property type="match status" value="1"/>
</dbReference>
<dbReference type="PANTHER" id="PTHR43375">
    <property type="entry name" value="OROTIDINE 5'-PHOSPHATE DECARBOXYLASE"/>
    <property type="match status" value="1"/>
</dbReference>
<dbReference type="PANTHER" id="PTHR43375:SF1">
    <property type="entry name" value="OROTIDINE 5'-PHOSPHATE DECARBOXYLASE"/>
    <property type="match status" value="1"/>
</dbReference>
<dbReference type="Pfam" id="PF00215">
    <property type="entry name" value="OMPdecase"/>
    <property type="match status" value="1"/>
</dbReference>
<dbReference type="SMART" id="SM00934">
    <property type="entry name" value="OMPdecase"/>
    <property type="match status" value="1"/>
</dbReference>
<dbReference type="SUPFAM" id="SSF51366">
    <property type="entry name" value="Ribulose-phoshate binding barrel"/>
    <property type="match status" value="1"/>
</dbReference>
<feature type="chain" id="PRO_1000138958" description="Orotidine 5'-phosphate decarboxylase">
    <location>
        <begin position="1"/>
        <end position="276"/>
    </location>
</feature>
<feature type="active site" description="Proton donor" evidence="1">
    <location>
        <position position="96"/>
    </location>
</feature>
<proteinExistence type="inferred from homology"/>
<gene>
    <name evidence="1" type="primary">pyrF</name>
    <name type="ordered locus">PGN_2021</name>
</gene>
<protein>
    <recommendedName>
        <fullName evidence="1">Orotidine 5'-phosphate decarboxylase</fullName>
        <ecNumber evidence="1">4.1.1.23</ecNumber>
    </recommendedName>
    <alternativeName>
        <fullName evidence="1">OMP decarboxylase</fullName>
        <shortName evidence="1">OMPDCase</shortName>
        <shortName evidence="1">OMPdecase</shortName>
    </alternativeName>
</protein>
<comment type="catalytic activity">
    <reaction evidence="1">
        <text>orotidine 5'-phosphate + H(+) = UMP + CO2</text>
        <dbReference type="Rhea" id="RHEA:11596"/>
        <dbReference type="ChEBI" id="CHEBI:15378"/>
        <dbReference type="ChEBI" id="CHEBI:16526"/>
        <dbReference type="ChEBI" id="CHEBI:57538"/>
        <dbReference type="ChEBI" id="CHEBI:57865"/>
        <dbReference type="EC" id="4.1.1.23"/>
    </reaction>
</comment>
<comment type="pathway">
    <text evidence="1">Pyrimidine metabolism; UMP biosynthesis via de novo pathway; UMP from orotate: step 2/2.</text>
</comment>
<comment type="similarity">
    <text evidence="1">Belongs to the OMP decarboxylase family. Type 2 subfamily.</text>
</comment>
<name>PYRF_PORG3</name>
<accession>B2RME4</accession>
<organism>
    <name type="scientific">Porphyromonas gingivalis (strain ATCC 33277 / DSM 20709 / CIP 103683 / JCM 12257 / NCTC 11834 / 2561)</name>
    <dbReference type="NCBI Taxonomy" id="431947"/>
    <lineage>
        <taxon>Bacteria</taxon>
        <taxon>Pseudomonadati</taxon>
        <taxon>Bacteroidota</taxon>
        <taxon>Bacteroidia</taxon>
        <taxon>Bacteroidales</taxon>
        <taxon>Porphyromonadaceae</taxon>
        <taxon>Porphyromonas</taxon>
    </lineage>
</organism>
<keyword id="KW-0210">Decarboxylase</keyword>
<keyword id="KW-0456">Lyase</keyword>
<keyword id="KW-0665">Pyrimidine biosynthesis</keyword>